<feature type="chain" id="PRO_1000187314" description="Malonate-semialdehyde dehydrogenase">
    <location>
        <begin position="1"/>
        <end position="486"/>
    </location>
</feature>
<feature type="active site" description="Nucleophile" evidence="1">
    <location>
        <position position="286"/>
    </location>
</feature>
<feature type="binding site" evidence="1">
    <location>
        <position position="154"/>
    </location>
    <ligand>
        <name>NAD(+)</name>
        <dbReference type="ChEBI" id="CHEBI:57540"/>
    </ligand>
</feature>
<feature type="binding site" evidence="1">
    <location>
        <position position="178"/>
    </location>
    <ligand>
        <name>NAD(+)</name>
        <dbReference type="ChEBI" id="CHEBI:57540"/>
    </ligand>
</feature>
<feature type="binding site" evidence="1">
    <location>
        <position position="181"/>
    </location>
    <ligand>
        <name>NAD(+)</name>
        <dbReference type="ChEBI" id="CHEBI:57540"/>
    </ligand>
</feature>
<feature type="binding site" evidence="1">
    <location>
        <position position="182"/>
    </location>
    <ligand>
        <name>NAD(+)</name>
        <dbReference type="ChEBI" id="CHEBI:57540"/>
    </ligand>
</feature>
<feature type="binding site" evidence="1">
    <location>
        <position position="231"/>
    </location>
    <ligand>
        <name>NAD(+)</name>
        <dbReference type="ChEBI" id="CHEBI:57540"/>
    </ligand>
</feature>
<feature type="binding site" evidence="1">
    <location>
        <position position="386"/>
    </location>
    <ligand>
        <name>NAD(+)</name>
        <dbReference type="ChEBI" id="CHEBI:57540"/>
    </ligand>
</feature>
<dbReference type="EC" id="1.2.1.27" evidence="1"/>
<dbReference type="EMBL" id="CP000227">
    <property type="protein sequence ID" value="ACM12709.1"/>
    <property type="molecule type" value="Genomic_DNA"/>
</dbReference>
<dbReference type="SMR" id="B9IZZ7"/>
<dbReference type="KEGG" id="bcq:BCQ_2281"/>
<dbReference type="HOGENOM" id="CLU_005391_1_10_9"/>
<dbReference type="UniPathway" id="UPA00076">
    <property type="reaction ID" value="UER00148"/>
</dbReference>
<dbReference type="Proteomes" id="UP000000441">
    <property type="component" value="Chromosome"/>
</dbReference>
<dbReference type="GO" id="GO:0018478">
    <property type="term" value="F:malonate-semialdehyde dehydrogenase (acetylating) activity"/>
    <property type="evidence" value="ECO:0007669"/>
    <property type="project" value="UniProtKB-UniRule"/>
</dbReference>
<dbReference type="GO" id="GO:0004491">
    <property type="term" value="F:methylmalonate-semialdehyde dehydrogenase (acylating, NAD) activity"/>
    <property type="evidence" value="ECO:0007669"/>
    <property type="project" value="UniProtKB-UniRule"/>
</dbReference>
<dbReference type="GO" id="GO:0019310">
    <property type="term" value="P:inositol catabolic process"/>
    <property type="evidence" value="ECO:0007669"/>
    <property type="project" value="UniProtKB-UniRule"/>
</dbReference>
<dbReference type="GO" id="GO:0006210">
    <property type="term" value="P:thymine catabolic process"/>
    <property type="evidence" value="ECO:0007669"/>
    <property type="project" value="TreeGrafter"/>
</dbReference>
<dbReference type="GO" id="GO:0006574">
    <property type="term" value="P:valine catabolic process"/>
    <property type="evidence" value="ECO:0007669"/>
    <property type="project" value="TreeGrafter"/>
</dbReference>
<dbReference type="CDD" id="cd07085">
    <property type="entry name" value="ALDH_F6_MMSDH"/>
    <property type="match status" value="1"/>
</dbReference>
<dbReference type="FunFam" id="3.40.309.10:FF:000002">
    <property type="entry name" value="Methylmalonate-semialdehyde dehydrogenase (Acylating)"/>
    <property type="match status" value="1"/>
</dbReference>
<dbReference type="FunFam" id="3.40.605.10:FF:000003">
    <property type="entry name" value="Methylmalonate-semialdehyde dehydrogenase [acylating]"/>
    <property type="match status" value="1"/>
</dbReference>
<dbReference type="Gene3D" id="3.40.605.10">
    <property type="entry name" value="Aldehyde Dehydrogenase, Chain A, domain 1"/>
    <property type="match status" value="1"/>
</dbReference>
<dbReference type="Gene3D" id="3.40.309.10">
    <property type="entry name" value="Aldehyde Dehydrogenase, Chain A, domain 2"/>
    <property type="match status" value="1"/>
</dbReference>
<dbReference type="HAMAP" id="MF_01670">
    <property type="entry name" value="IolA"/>
    <property type="match status" value="1"/>
</dbReference>
<dbReference type="InterPro" id="IPR016161">
    <property type="entry name" value="Ald_DH/histidinol_DH"/>
</dbReference>
<dbReference type="InterPro" id="IPR016163">
    <property type="entry name" value="Ald_DH_C"/>
</dbReference>
<dbReference type="InterPro" id="IPR016160">
    <property type="entry name" value="Ald_DH_CS_CYS"/>
</dbReference>
<dbReference type="InterPro" id="IPR016162">
    <property type="entry name" value="Ald_DH_N"/>
</dbReference>
<dbReference type="InterPro" id="IPR015590">
    <property type="entry name" value="Aldehyde_DH_dom"/>
</dbReference>
<dbReference type="InterPro" id="IPR010061">
    <property type="entry name" value="MeMal-semiAld_DH"/>
</dbReference>
<dbReference type="InterPro" id="IPR023510">
    <property type="entry name" value="MSDH_GmP_bac"/>
</dbReference>
<dbReference type="NCBIfam" id="TIGR01722">
    <property type="entry name" value="MMSDH"/>
    <property type="match status" value="1"/>
</dbReference>
<dbReference type="PANTHER" id="PTHR43866">
    <property type="entry name" value="MALONATE-SEMIALDEHYDE DEHYDROGENASE"/>
    <property type="match status" value="1"/>
</dbReference>
<dbReference type="PANTHER" id="PTHR43866:SF4">
    <property type="entry name" value="MALONATE-SEMIALDEHYDE DEHYDROGENASE"/>
    <property type="match status" value="1"/>
</dbReference>
<dbReference type="Pfam" id="PF00171">
    <property type="entry name" value="Aldedh"/>
    <property type="match status" value="1"/>
</dbReference>
<dbReference type="SUPFAM" id="SSF53720">
    <property type="entry name" value="ALDH-like"/>
    <property type="match status" value="1"/>
</dbReference>
<dbReference type="PROSITE" id="PS00070">
    <property type="entry name" value="ALDEHYDE_DEHYDR_CYS"/>
    <property type="match status" value="1"/>
</dbReference>
<reference key="1">
    <citation type="journal article" date="2009" name="J. Bacteriol.">
        <title>Complete genome sequence of the extremophilic Bacillus cereus strain Q1 with industrial applications.</title>
        <authorList>
            <person name="Xiong Z."/>
            <person name="Jiang Y."/>
            <person name="Qi D."/>
            <person name="Lu H."/>
            <person name="Yang F."/>
            <person name="Yang J."/>
            <person name="Chen L."/>
            <person name="Sun L."/>
            <person name="Xu X."/>
            <person name="Xue Y."/>
            <person name="Zhu Y."/>
            <person name="Jin Q."/>
        </authorList>
    </citation>
    <scope>NUCLEOTIDE SEQUENCE [LARGE SCALE GENOMIC DNA]</scope>
    <source>
        <strain>Q1</strain>
    </source>
</reference>
<name>IOLA_BACCQ</name>
<accession>B9IZZ7</accession>
<protein>
    <recommendedName>
        <fullName evidence="1">Malonate-semialdehyde dehydrogenase</fullName>
        <shortName evidence="1">MSA dehydrogenase</shortName>
        <ecNumber evidence="1">1.2.1.27</ecNumber>
    </recommendedName>
    <alternativeName>
        <fullName evidence="1">Methylmalonate-semialdehyde dehydrogenase</fullName>
        <shortName evidence="1">MMSA dehydrogenase</shortName>
        <shortName evidence="1">MSDH</shortName>
    </alternativeName>
</protein>
<keyword id="KW-0520">NAD</keyword>
<keyword id="KW-0560">Oxidoreductase</keyword>
<organism>
    <name type="scientific">Bacillus cereus (strain Q1)</name>
    <dbReference type="NCBI Taxonomy" id="361100"/>
    <lineage>
        <taxon>Bacteria</taxon>
        <taxon>Bacillati</taxon>
        <taxon>Bacillota</taxon>
        <taxon>Bacilli</taxon>
        <taxon>Bacillales</taxon>
        <taxon>Bacillaceae</taxon>
        <taxon>Bacillus</taxon>
        <taxon>Bacillus cereus group</taxon>
    </lineage>
</organism>
<sequence length="486" mass="52978">MITTEIKRVKNHINGEWVESTGTEVEAVPNPATGKIIAYVPLSPKEDVEKAVEAAKAAYETWSKVPVPNRSRQLYKYLQLLQENKEELAKIITLENGKTLTDATGEVQRGIEAVELATSTPNLMMGQALPNIASGIDGSIWRYPIGVVAGITPFNFPMMIPLWMFPLAIACGNTFVLKTSERTPLLAERLVELFYEAGFPKGVLNLVQGGKDVVNSILENKDIQAVSFVGSEPVARYVYETGTKHGKRVQALAGAKNHAIVMPDCNLEKTVQGVIGSAFASSGERCMACSVVAVVDEIADEFIDVLVAETKKLKVGDGFHEDNYVGPLIRESHKERVLGYINSGVADGATLLVDGRKIKEEVGEGYFVGATIFDGVNQEMKIWQDEIFAPVLSIVRVKDLEEGIKLTNQSKFANGAVIYTSSGKHAQTFRDNIDAGMIGVNVNVPAPMAFFAFAGNKASFFGDLGTNGTDGVQFYTRKKVVTERWF</sequence>
<evidence type="ECO:0000255" key="1">
    <source>
        <dbReference type="HAMAP-Rule" id="MF_01670"/>
    </source>
</evidence>
<gene>
    <name evidence="1" type="primary">iolA</name>
    <name type="ordered locus">BCQ_2281</name>
</gene>
<proteinExistence type="inferred from homology"/>
<comment type="function">
    <text evidence="1">Catalyzes the oxidation of malonate semialdehyde (MSA) and methylmalonate semialdehyde (MMSA) into acetyl-CoA and propanoyl-CoA, respectively. Is involved in a myo-inositol catabolic pathway. Bicarbonate, and not CO2, is the end-product of the enzymatic reaction.</text>
</comment>
<comment type="catalytic activity">
    <reaction evidence="1">
        <text>3-oxopropanoate + NAD(+) + CoA + H2O = hydrogencarbonate + acetyl-CoA + NADH + H(+)</text>
        <dbReference type="Rhea" id="RHEA:76615"/>
        <dbReference type="ChEBI" id="CHEBI:15377"/>
        <dbReference type="ChEBI" id="CHEBI:15378"/>
        <dbReference type="ChEBI" id="CHEBI:17544"/>
        <dbReference type="ChEBI" id="CHEBI:33190"/>
        <dbReference type="ChEBI" id="CHEBI:57287"/>
        <dbReference type="ChEBI" id="CHEBI:57288"/>
        <dbReference type="ChEBI" id="CHEBI:57540"/>
        <dbReference type="ChEBI" id="CHEBI:57945"/>
        <dbReference type="EC" id="1.2.1.27"/>
    </reaction>
    <physiologicalReaction direction="left-to-right" evidence="1">
        <dbReference type="Rhea" id="RHEA:76616"/>
    </physiologicalReaction>
</comment>
<comment type="catalytic activity">
    <reaction evidence="1">
        <text>2-methyl-3-oxopropanoate + NAD(+) + CoA + H2O = propanoyl-CoA + hydrogencarbonate + NADH + H(+)</text>
        <dbReference type="Rhea" id="RHEA:20804"/>
        <dbReference type="ChEBI" id="CHEBI:15377"/>
        <dbReference type="ChEBI" id="CHEBI:15378"/>
        <dbReference type="ChEBI" id="CHEBI:17544"/>
        <dbReference type="ChEBI" id="CHEBI:57287"/>
        <dbReference type="ChEBI" id="CHEBI:57392"/>
        <dbReference type="ChEBI" id="CHEBI:57540"/>
        <dbReference type="ChEBI" id="CHEBI:57700"/>
        <dbReference type="ChEBI" id="CHEBI:57945"/>
        <dbReference type="EC" id="1.2.1.27"/>
    </reaction>
    <physiologicalReaction direction="left-to-right" evidence="1">
        <dbReference type="Rhea" id="RHEA:20805"/>
    </physiologicalReaction>
</comment>
<comment type="pathway">
    <text evidence="1">Polyol metabolism; myo-inositol degradation into acetyl-CoA; acetyl-CoA from myo-inositol: step 7/7.</text>
</comment>
<comment type="subunit">
    <text evidence="1">Homotetramer.</text>
</comment>
<comment type="similarity">
    <text evidence="1">Belongs to the aldehyde dehydrogenase family. IolA subfamily.</text>
</comment>